<gene>
    <name evidence="3" type="primary">PUF60</name>
    <name evidence="3" type="synonym">Siahbp1</name>
</gene>
<comment type="function">
    <text evidence="1">DNA- and RNA-binding protein, involved in several nuclear processes such as pre-mRNA splicing, apoptosis and transcription regulation. In association with FUBP1 regulates MYC transcription at the P2 promoter through the core-TFIIH basal transcription factor. Acts as a transcriptional repressor through the core-TFIIH basal transcription factor. Represses FUBP1-induced transcriptional activation but not basal transcription. Decreases ERCC3 helicase activity. Is also involved in pre-mRNA splicing. Promotes splicing of an intron with weak 3'-splice site and pyrimidine tract in a cooperative manner with U2AF2. Involved in apoptosis induction when overexpressed in HeLa cells. Modulates alternative splicing of several mRNAs. Binds to relaxed DNA of active promoter regions. Binds to the pyrimidine tract and 3'-splice site regions of pre-mRNA; binding is enhanced in presence of U2AF2. Binds to Y5 RNA in association with RO60. Binds to poly(U) RNA (By similarity).</text>
</comment>
<comment type="subunit">
    <text evidence="3">Homodimer. Associates with the spliceosome. Found in a complex with RO60 and Y5 RNA. Found in a complex with FUBP1 and far upstream element (FUSE) DNA segment. Interacts directly with ERCC3. Interacts with CDK7 and GTF2H1. Interacts with SRSF11/P54. Interacts with ARGLU1; interaction may be involved in ARGLU1-mediated modulation of alternative splicing.</text>
</comment>
<comment type="subcellular location">
    <subcellularLocation>
        <location evidence="3">Nucleus</location>
    </subcellularLocation>
    <text evidence="3">Colocalizes partially with RO60.</text>
</comment>
<comment type="domain">
    <text>The third RNA recognition motif, called PUMP domain, is atypical and may rather mediate homodimerization and/or protein-protein interactions.</text>
</comment>
<comment type="similarity">
    <text evidence="6">Belongs to the RRM half pint family.</text>
</comment>
<organism>
    <name type="scientific">Bos taurus</name>
    <name type="common">Bovine</name>
    <dbReference type="NCBI Taxonomy" id="9913"/>
    <lineage>
        <taxon>Eukaryota</taxon>
        <taxon>Metazoa</taxon>
        <taxon>Chordata</taxon>
        <taxon>Craniata</taxon>
        <taxon>Vertebrata</taxon>
        <taxon>Euteleostomi</taxon>
        <taxon>Mammalia</taxon>
        <taxon>Eutheria</taxon>
        <taxon>Laurasiatheria</taxon>
        <taxon>Artiodactyla</taxon>
        <taxon>Ruminantia</taxon>
        <taxon>Pecora</taxon>
        <taxon>Bovidae</taxon>
        <taxon>Bovinae</taxon>
        <taxon>Bos</taxon>
    </lineage>
</organism>
<protein>
    <recommendedName>
        <fullName evidence="3">Poly(U)-binding-splicing factor PUF60</fullName>
    </recommendedName>
    <alternativeName>
        <fullName evidence="3">60 kDa poly(U)-binding-splicing factor</fullName>
    </alternativeName>
</protein>
<accession>Q2HJG2</accession>
<dbReference type="EMBL" id="BC105447">
    <property type="protein sequence ID" value="AAI05448.1"/>
    <property type="molecule type" value="mRNA"/>
</dbReference>
<dbReference type="RefSeq" id="NP_001039598.1">
    <property type="nucleotide sequence ID" value="NM_001046133.2"/>
</dbReference>
<dbReference type="BMRB" id="Q2HJG2"/>
<dbReference type="SMR" id="Q2HJG2"/>
<dbReference type="FunCoup" id="Q2HJG2">
    <property type="interactions" value="388"/>
</dbReference>
<dbReference type="STRING" id="9913.ENSBTAP00000061124"/>
<dbReference type="PaxDb" id="9913-ENSBTAP00000002882"/>
<dbReference type="PeptideAtlas" id="Q2HJG2"/>
<dbReference type="GeneID" id="512824"/>
<dbReference type="KEGG" id="bta:512824"/>
<dbReference type="CTD" id="22827"/>
<dbReference type="eggNOG" id="KOG0124">
    <property type="taxonomic scope" value="Eukaryota"/>
</dbReference>
<dbReference type="InParanoid" id="Q2HJG2"/>
<dbReference type="OrthoDB" id="20943at2759"/>
<dbReference type="Proteomes" id="UP000009136">
    <property type="component" value="Unplaced"/>
</dbReference>
<dbReference type="GO" id="GO:0005634">
    <property type="term" value="C:nucleus"/>
    <property type="evidence" value="ECO:0007669"/>
    <property type="project" value="UniProtKB-SubCell"/>
</dbReference>
<dbReference type="GO" id="GO:1990904">
    <property type="term" value="C:ribonucleoprotein complex"/>
    <property type="evidence" value="ECO:0007669"/>
    <property type="project" value="UniProtKB-KW"/>
</dbReference>
<dbReference type="GO" id="GO:0003677">
    <property type="term" value="F:DNA binding"/>
    <property type="evidence" value="ECO:0007669"/>
    <property type="project" value="UniProtKB-KW"/>
</dbReference>
<dbReference type="GO" id="GO:0003723">
    <property type="term" value="F:RNA binding"/>
    <property type="evidence" value="ECO:0007669"/>
    <property type="project" value="UniProtKB-KW"/>
</dbReference>
<dbReference type="GO" id="GO:0000380">
    <property type="term" value="P:alternative mRNA splicing, via spliceosome"/>
    <property type="evidence" value="ECO:0000318"/>
    <property type="project" value="GO_Central"/>
</dbReference>
<dbReference type="GO" id="GO:0006915">
    <property type="term" value="P:apoptotic process"/>
    <property type="evidence" value="ECO:0007669"/>
    <property type="project" value="UniProtKB-KW"/>
</dbReference>
<dbReference type="GO" id="GO:0006376">
    <property type="term" value="P:mRNA splice site recognition"/>
    <property type="evidence" value="ECO:0000318"/>
    <property type="project" value="GO_Central"/>
</dbReference>
<dbReference type="GO" id="GO:0000381">
    <property type="term" value="P:regulation of alternative mRNA splicing, via spliceosome"/>
    <property type="evidence" value="ECO:0000318"/>
    <property type="project" value="GO_Central"/>
</dbReference>
<dbReference type="CDD" id="cd12370">
    <property type="entry name" value="RRM1_PUF60"/>
    <property type="match status" value="1"/>
</dbReference>
<dbReference type="CDD" id="cd12371">
    <property type="entry name" value="RRM2_PUF60"/>
    <property type="match status" value="1"/>
</dbReference>
<dbReference type="CDD" id="cd12648">
    <property type="entry name" value="RRM3_UHM_PUF60"/>
    <property type="match status" value="1"/>
</dbReference>
<dbReference type="FunFam" id="3.30.70.330:FF:000133">
    <property type="entry name" value="poly(U)-binding-splicing factor PUF60 isoform X1"/>
    <property type="match status" value="1"/>
</dbReference>
<dbReference type="FunFam" id="3.30.70.330:FF:000136">
    <property type="entry name" value="poly(U)-binding-splicing factor PUF60 isoform X1"/>
    <property type="match status" value="1"/>
</dbReference>
<dbReference type="FunFam" id="3.30.70.330:FF:000152">
    <property type="entry name" value="poly(U)-binding-splicing factor PUF60 isoform X1"/>
    <property type="match status" value="1"/>
</dbReference>
<dbReference type="Gene3D" id="3.30.70.330">
    <property type="match status" value="3"/>
</dbReference>
<dbReference type="InterPro" id="IPR012677">
    <property type="entry name" value="Nucleotide-bd_a/b_plait_sf"/>
</dbReference>
<dbReference type="InterPro" id="IPR006532">
    <property type="entry name" value="PUF60-like"/>
</dbReference>
<dbReference type="InterPro" id="IPR051974">
    <property type="entry name" value="PUF60_regulator"/>
</dbReference>
<dbReference type="InterPro" id="IPR034209">
    <property type="entry name" value="PUF60_RRM1"/>
</dbReference>
<dbReference type="InterPro" id="IPR034211">
    <property type="entry name" value="PUF60_RRM2"/>
</dbReference>
<dbReference type="InterPro" id="IPR034212">
    <property type="entry name" value="PUF60_RRM3"/>
</dbReference>
<dbReference type="InterPro" id="IPR035979">
    <property type="entry name" value="RBD_domain_sf"/>
</dbReference>
<dbReference type="InterPro" id="IPR000504">
    <property type="entry name" value="RRM_dom"/>
</dbReference>
<dbReference type="InterPro" id="IPR003954">
    <property type="entry name" value="RRM_dom_euk"/>
</dbReference>
<dbReference type="NCBIfam" id="TIGR01645">
    <property type="entry name" value="half-pint"/>
    <property type="match status" value="1"/>
</dbReference>
<dbReference type="PANTHER" id="PTHR47330:SF1">
    <property type="entry name" value="POLY(U)-BINDING-SPLICING FACTOR PUF60"/>
    <property type="match status" value="1"/>
</dbReference>
<dbReference type="PANTHER" id="PTHR47330">
    <property type="entry name" value="POLY(U)-BINDING-SPLICING FACTOR PUF60-B-RELATED"/>
    <property type="match status" value="1"/>
</dbReference>
<dbReference type="Pfam" id="PF00076">
    <property type="entry name" value="RRM_1"/>
    <property type="match status" value="2"/>
</dbReference>
<dbReference type="SMART" id="SM00360">
    <property type="entry name" value="RRM"/>
    <property type="match status" value="3"/>
</dbReference>
<dbReference type="SMART" id="SM00361">
    <property type="entry name" value="RRM_1"/>
    <property type="match status" value="2"/>
</dbReference>
<dbReference type="SUPFAM" id="SSF54928">
    <property type="entry name" value="RNA-binding domain, RBD"/>
    <property type="match status" value="2"/>
</dbReference>
<dbReference type="PROSITE" id="PS50102">
    <property type="entry name" value="RRM"/>
    <property type="match status" value="3"/>
</dbReference>
<keyword id="KW-0007">Acetylation</keyword>
<keyword id="KW-0053">Apoptosis</keyword>
<keyword id="KW-0238">DNA-binding</keyword>
<keyword id="KW-1017">Isopeptide bond</keyword>
<keyword id="KW-0507">mRNA processing</keyword>
<keyword id="KW-0508">mRNA splicing</keyword>
<keyword id="KW-0539">Nucleus</keyword>
<keyword id="KW-0597">Phosphoprotein</keyword>
<keyword id="KW-1185">Reference proteome</keyword>
<keyword id="KW-0677">Repeat</keyword>
<keyword id="KW-0678">Repressor</keyword>
<keyword id="KW-0687">Ribonucleoprotein</keyword>
<keyword id="KW-0694">RNA-binding</keyword>
<keyword id="KW-0804">Transcription</keyword>
<keyword id="KW-0805">Transcription regulation</keyword>
<keyword id="KW-0832">Ubl conjugation</keyword>
<feature type="chain" id="PRO_0000299518" description="Poly(U)-binding-splicing factor PUF60">
    <location>
        <begin position="1"/>
        <end position="530"/>
    </location>
</feature>
<feature type="domain" description="RRM 1" evidence="4">
    <location>
        <begin position="100"/>
        <end position="178"/>
    </location>
</feature>
<feature type="domain" description="RRM 2" evidence="4">
    <location>
        <begin position="197"/>
        <end position="275"/>
    </location>
</feature>
<feature type="domain" description="RRM 3; atypical" evidence="4">
    <location>
        <begin position="433"/>
        <end position="520"/>
    </location>
</feature>
<feature type="region of interest" description="Inhibits homodimerization" evidence="1">
    <location>
        <begin position="1"/>
        <end position="487"/>
    </location>
</feature>
<feature type="region of interest" description="Inhibits transcriptional repression, interaction with ERCC3 and apoptosis induction" evidence="1">
    <location>
        <begin position="48"/>
        <end position="530"/>
    </location>
</feature>
<feature type="region of interest" description="Disordered" evidence="5">
    <location>
        <begin position="387"/>
        <end position="408"/>
    </location>
</feature>
<feature type="compositionally biased region" description="Basic and acidic residues" evidence="5">
    <location>
        <begin position="398"/>
        <end position="408"/>
    </location>
</feature>
<feature type="modified residue" description="Phosphothreonine" evidence="3">
    <location>
        <position position="31"/>
    </location>
</feature>
<feature type="modified residue" description="Phosphoserine" evidence="3">
    <location>
        <position position="83"/>
    </location>
</feature>
<feature type="modified residue" description="Phosphoserine" evidence="2">
    <location>
        <position position="215"/>
    </location>
</feature>
<feature type="modified residue" description="N6-acetyllysine" evidence="3">
    <location>
        <position position="222"/>
    </location>
</feature>
<feature type="modified residue" description="Phosphothreonine" evidence="3">
    <location>
        <position position="285"/>
    </location>
</feature>
<feature type="modified residue" description="N6-acetyllysine" evidence="3">
    <location>
        <position position="425"/>
    </location>
</feature>
<feature type="cross-link" description="Glycyl lysine isopeptide (Lys-Gly) (interchain with G-Cter in SUMO2)" evidence="3">
    <location>
        <position position="14"/>
    </location>
</feature>
<feature type="cross-link" description="Glycyl lysine isopeptide (Lys-Gly) (interchain with G-Cter in SUMO2)" evidence="3">
    <location>
        <position position="51"/>
    </location>
</feature>
<feature type="cross-link" description="Glycyl lysine isopeptide (Lys-Gly) (interchain with G-Cter in SUMO2)" evidence="3">
    <location>
        <position position="390"/>
    </location>
</feature>
<feature type="cross-link" description="Glycyl lysine isopeptide (Lys-Gly) (interchain with G-Cter in SUMO2)" evidence="3">
    <location>
        <position position="429"/>
    </location>
</feature>
<reference key="1">
    <citation type="submission" date="2005-09" db="EMBL/GenBank/DDBJ databases">
        <authorList>
            <consortium name="NIH - Mammalian Gene Collection (MGC) project"/>
        </authorList>
    </citation>
    <scope>NUCLEOTIDE SEQUENCE [LARGE SCALE MRNA]</scope>
    <source>
        <strain>Hereford</strain>
        <tissue>Hypothalamus</tissue>
    </source>
</reference>
<name>PUF60_BOVIN</name>
<evidence type="ECO:0000250" key="1"/>
<evidence type="ECO:0000250" key="2">
    <source>
        <dbReference type="UniProtKB" id="Q3UEB3"/>
    </source>
</evidence>
<evidence type="ECO:0000250" key="3">
    <source>
        <dbReference type="UniProtKB" id="Q9UHX1"/>
    </source>
</evidence>
<evidence type="ECO:0000255" key="4">
    <source>
        <dbReference type="PROSITE-ProRule" id="PRU00176"/>
    </source>
</evidence>
<evidence type="ECO:0000256" key="5">
    <source>
        <dbReference type="SAM" id="MobiDB-lite"/>
    </source>
</evidence>
<evidence type="ECO:0000305" key="6"/>
<sequence>MATATIALGTDSIKMENGQGTAAKLGLPPLTPEQQEALQKAKKYAMEQSIKSVLVKQTIAHQQQQLTNLQMAAVTMGFGDPLSPLQSMAAQRQRALAIMCRVYVGSIYYELGEDTIRQAFAPFGPIKSIDMSWDSVTMKHKGFAFVEYEVPEAAQLALEQMNSVMLGGRNIKVGRPSNIGQAQPIIDQLAEEARAFNRIYVASVHQDLSDDDIKSVFEAFGKIKSCTLARDPTTGKHKGYGFIEYEKAQSSQDAVSSMNLFDLGGQYLRVGKAVTPPMPLLTPATPGGLPPAAAVAAAAATAKITAQEAVAGAAVLGTLATPGLVSPALTLAQPLGALPQAVMAAQAPGVITGVTPARPPIPVTIPSVGVVNPILASPPTLGLLEPKKEKEEEELFPESERPEMLSEQEHMSISGSSARHMVMQKLLRKQESTVMVLRNMVDPKDIDDDLEGEVTEECGKFGAVNRVIIYQEKQGEEEDAEIIVKIFVEFSVASETHKAIQDLNGRWFAGRKVVAEVYDQERFDNSDLSA</sequence>
<proteinExistence type="evidence at transcript level"/>